<proteinExistence type="inferred from homology"/>
<sequence length="1043" mass="113652">MTTTNTSIFGPRVNNSKFNNNNNNNNNNNNNNNNTSNNNNSNIIKPPQVVQETQQQQQAQQQPLQTNEEVCVICKSKNVQVCTGCLMVYYCGAEHQNIDWPNHKSLCSGLNRRNDLLDRAEKSKDLRKKLQSDIFSSGNRVSNSNNNSSIYSNSTGNINNNNNSNNNNIKGGIGGGAVTNSSTVMAPERKSIAISNIKHLQQQIQQTQQTQQQPPPTTTSIPTQPNSSSFNKPTAKKPGTSFKSSSSGDNTPINQSPSSSSSSLVSSTNNNNNNNNNNNNNNNINSNSNNMSGSSGGIKALQNQLQNSINNKPSNTTSNSPNPSPPSSTFVPNSNNNSNSNSSSGSGKSNLNISLKSSTSSSPVTSTYLYNNNNSNSNSNSNNSSTETTTCISSNSNNSSNIENSDNTNEENGMKNIKNKLSQINFGAPPPSFKKPTSKVIENEDNNNSNNDGTLKQSSSSDSIYFNNNNNNNNNNNNNNNNNNNNNNNNNNNNNNNNNNNNNNNNNNNNNNNNNNNNNNSNNNNFDINNSNNIINNKQSTCSSIDGLSYNNNNSGSSLKNSVPPTTSNTPPRKRSSGGSSSSNNSNIGSNGNRIGFIKEHKKNQSLPDSFVDFYQSNKNQSNGYESLLDNDDNKTRGYGSFNENDDSHEECDDDDDDDDGGGQDGDDGLDGTEFKRGRNRPTGLRTNNNAVFEWESGTIEYSTNNTSQHKKLGVGSRGGNSFSKDTQSQSTNSTTTDDHQTGSILNSNSGSSDDLQQQQTQTQQQQSQLSAGVGRIAGKFRMIGGDIKKKAAIVGTLTKNKVSEVTSKSKSSTSVNNNNNDEVDHNENNNNNNNNINNNNNNNNNNIENIIFGIPLEEAVKKSATLHPLIPDVIYKSIEYIREKGIQEEGIFRLSGSANAITLLKNEFDRGVNVDLYQQLDQHVVSGILKLYLRQIPETLFTQDFGEELEELRVGGNSSDAISKRIAGSIILLQRLPESNRCILHYLCNLLNAISFEPSTKMGTVNLAIVFAPTLGVSVEVMTCLISYYDEIFGIQTYNYNS</sequence>
<protein>
    <recommendedName>
        <fullName>Rho GTPase-activating protein gacZ</fullName>
    </recommendedName>
    <alternativeName>
        <fullName>GTPase activating factor for raC protein Z</fullName>
    </alternativeName>
</protein>
<evidence type="ECO:0000250" key="1"/>
<evidence type="ECO:0000255" key="2"/>
<evidence type="ECO:0000255" key="3">
    <source>
        <dbReference type="PROSITE-ProRule" id="PRU00134"/>
    </source>
</evidence>
<evidence type="ECO:0000255" key="4">
    <source>
        <dbReference type="PROSITE-ProRule" id="PRU00172"/>
    </source>
</evidence>
<evidence type="ECO:0000256" key="5">
    <source>
        <dbReference type="SAM" id="MobiDB-lite"/>
    </source>
</evidence>
<organism>
    <name type="scientific">Dictyostelium discoideum</name>
    <name type="common">Social amoeba</name>
    <dbReference type="NCBI Taxonomy" id="44689"/>
    <lineage>
        <taxon>Eukaryota</taxon>
        <taxon>Amoebozoa</taxon>
        <taxon>Evosea</taxon>
        <taxon>Eumycetozoa</taxon>
        <taxon>Dictyostelia</taxon>
        <taxon>Dictyosteliales</taxon>
        <taxon>Dictyosteliaceae</taxon>
        <taxon>Dictyostelium</taxon>
    </lineage>
</organism>
<name>GACZ_DICDI</name>
<comment type="function">
    <text evidence="1">Rho GTPase-activating protein involved in the signal transduction pathway.</text>
</comment>
<comment type="subcellular location">
    <subcellularLocation>
        <location evidence="1">Cytoplasm</location>
    </subcellularLocation>
</comment>
<feature type="chain" id="PRO_0000380223" description="Rho GTPase-activating protein gacZ">
    <location>
        <begin position="1"/>
        <end position="1043"/>
    </location>
</feature>
<feature type="domain" description="Rho-GAP" evidence="4">
    <location>
        <begin position="855"/>
        <end position="1043"/>
    </location>
</feature>
<feature type="zinc finger region" description="MYND-type; atypical" evidence="3">
    <location>
        <begin position="71"/>
        <end position="107"/>
    </location>
</feature>
<feature type="region of interest" description="Disordered" evidence="5">
    <location>
        <begin position="1"/>
        <end position="44"/>
    </location>
</feature>
<feature type="region of interest" description="Disordered" evidence="5">
    <location>
        <begin position="137"/>
        <end position="163"/>
    </location>
</feature>
<feature type="region of interest" description="Disordered" evidence="5">
    <location>
        <begin position="199"/>
        <end position="532"/>
    </location>
</feature>
<feature type="region of interest" description="Disordered" evidence="5">
    <location>
        <begin position="546"/>
        <end position="594"/>
    </location>
</feature>
<feature type="region of interest" description="Disordered" evidence="5">
    <location>
        <begin position="614"/>
        <end position="690"/>
    </location>
</feature>
<feature type="region of interest" description="Disordered" evidence="5">
    <location>
        <begin position="706"/>
        <end position="772"/>
    </location>
</feature>
<feature type="region of interest" description="Disordered" evidence="5">
    <location>
        <begin position="801"/>
        <end position="842"/>
    </location>
</feature>
<feature type="coiled-coil region" evidence="2">
    <location>
        <begin position="825"/>
        <end position="852"/>
    </location>
</feature>
<feature type="compositionally biased region" description="Low complexity" evidence="5">
    <location>
        <begin position="14"/>
        <end position="44"/>
    </location>
</feature>
<feature type="compositionally biased region" description="Low complexity" evidence="5">
    <location>
        <begin position="201"/>
        <end position="225"/>
    </location>
</feature>
<feature type="compositionally biased region" description="Polar residues" evidence="5">
    <location>
        <begin position="241"/>
        <end position="253"/>
    </location>
</feature>
<feature type="compositionally biased region" description="Low complexity" evidence="5">
    <location>
        <begin position="254"/>
        <end position="293"/>
    </location>
</feature>
<feature type="compositionally biased region" description="Low complexity" evidence="5">
    <location>
        <begin position="307"/>
        <end position="411"/>
    </location>
</feature>
<feature type="compositionally biased region" description="Polar residues" evidence="5">
    <location>
        <begin position="453"/>
        <end position="466"/>
    </location>
</feature>
<feature type="compositionally biased region" description="Low complexity" evidence="5">
    <location>
        <begin position="467"/>
        <end position="532"/>
    </location>
</feature>
<feature type="compositionally biased region" description="Low complexity" evidence="5">
    <location>
        <begin position="547"/>
        <end position="594"/>
    </location>
</feature>
<feature type="compositionally biased region" description="Polar residues" evidence="5">
    <location>
        <begin position="615"/>
        <end position="625"/>
    </location>
</feature>
<feature type="compositionally biased region" description="Acidic residues" evidence="5">
    <location>
        <begin position="644"/>
        <end position="671"/>
    </location>
</feature>
<feature type="compositionally biased region" description="Low complexity" evidence="5">
    <location>
        <begin position="726"/>
        <end position="736"/>
    </location>
</feature>
<feature type="compositionally biased region" description="Low complexity" evidence="5">
    <location>
        <begin position="752"/>
        <end position="771"/>
    </location>
</feature>
<feature type="compositionally biased region" description="Low complexity" evidence="5">
    <location>
        <begin position="801"/>
        <end position="821"/>
    </location>
</feature>
<feature type="compositionally biased region" description="Low complexity" evidence="5">
    <location>
        <begin position="829"/>
        <end position="842"/>
    </location>
</feature>
<feature type="binding site" evidence="3">
    <location>
        <position position="71"/>
    </location>
    <ligand>
        <name>Zn(2+)</name>
        <dbReference type="ChEBI" id="CHEBI:29105"/>
        <label>1</label>
    </ligand>
</feature>
<feature type="binding site" evidence="3">
    <location>
        <position position="74"/>
    </location>
    <ligand>
        <name>Zn(2+)</name>
        <dbReference type="ChEBI" id="CHEBI:29105"/>
        <label>1</label>
    </ligand>
</feature>
<feature type="binding site" evidence="3">
    <location>
        <position position="82"/>
    </location>
    <ligand>
        <name>Zn(2+)</name>
        <dbReference type="ChEBI" id="CHEBI:29105"/>
        <label>2</label>
    </ligand>
</feature>
<feature type="binding site" evidence="3">
    <location>
        <position position="85"/>
    </location>
    <ligand>
        <name>Zn(2+)</name>
        <dbReference type="ChEBI" id="CHEBI:29105"/>
        <label>2</label>
    </ligand>
</feature>
<feature type="binding site" evidence="3">
    <location>
        <position position="91"/>
    </location>
    <ligand>
        <name>Zn(2+)</name>
        <dbReference type="ChEBI" id="CHEBI:29105"/>
        <label>1</label>
    </ligand>
</feature>
<feature type="binding site" evidence="3">
    <location>
        <position position="95"/>
    </location>
    <ligand>
        <name>Zn(2+)</name>
        <dbReference type="ChEBI" id="CHEBI:29105"/>
        <label>1</label>
    </ligand>
</feature>
<feature type="binding site" evidence="3">
    <location>
        <position position="103"/>
    </location>
    <ligand>
        <name>Zn(2+)</name>
        <dbReference type="ChEBI" id="CHEBI:29105"/>
        <label>2</label>
    </ligand>
</feature>
<feature type="binding site" evidence="3">
    <location>
        <position position="107"/>
    </location>
    <ligand>
        <name>Zn(2+)</name>
        <dbReference type="ChEBI" id="CHEBI:29105"/>
        <label>2</label>
    </ligand>
</feature>
<feature type="site" description="Arginine finger; crucial for GTP hydrolysis by stabilizing the transition state" evidence="4">
    <location>
        <position position="894"/>
    </location>
</feature>
<keyword id="KW-0175">Coiled coil</keyword>
<keyword id="KW-0963">Cytoplasm</keyword>
<keyword id="KW-0343">GTPase activation</keyword>
<keyword id="KW-0479">Metal-binding</keyword>
<keyword id="KW-1185">Reference proteome</keyword>
<keyword id="KW-0862">Zinc</keyword>
<keyword id="KW-0863">Zinc-finger</keyword>
<accession>Q55DW9</accession>
<reference key="1">
    <citation type="journal article" date="2005" name="Nature">
        <title>The genome of the social amoeba Dictyostelium discoideum.</title>
        <authorList>
            <person name="Eichinger L."/>
            <person name="Pachebat J.A."/>
            <person name="Gloeckner G."/>
            <person name="Rajandream M.A."/>
            <person name="Sucgang R."/>
            <person name="Berriman M."/>
            <person name="Song J."/>
            <person name="Olsen R."/>
            <person name="Szafranski K."/>
            <person name="Xu Q."/>
            <person name="Tunggal B."/>
            <person name="Kummerfeld S."/>
            <person name="Madera M."/>
            <person name="Konfortov B.A."/>
            <person name="Rivero F."/>
            <person name="Bankier A.T."/>
            <person name="Lehmann R."/>
            <person name="Hamlin N."/>
            <person name="Davies R."/>
            <person name="Gaudet P."/>
            <person name="Fey P."/>
            <person name="Pilcher K."/>
            <person name="Chen G."/>
            <person name="Saunders D."/>
            <person name="Sodergren E.J."/>
            <person name="Davis P."/>
            <person name="Kerhornou A."/>
            <person name="Nie X."/>
            <person name="Hall N."/>
            <person name="Anjard C."/>
            <person name="Hemphill L."/>
            <person name="Bason N."/>
            <person name="Farbrother P."/>
            <person name="Desany B."/>
            <person name="Just E."/>
            <person name="Morio T."/>
            <person name="Rost R."/>
            <person name="Churcher C.M."/>
            <person name="Cooper J."/>
            <person name="Haydock S."/>
            <person name="van Driessche N."/>
            <person name="Cronin A."/>
            <person name="Goodhead I."/>
            <person name="Muzny D.M."/>
            <person name="Mourier T."/>
            <person name="Pain A."/>
            <person name="Lu M."/>
            <person name="Harper D."/>
            <person name="Lindsay R."/>
            <person name="Hauser H."/>
            <person name="James K.D."/>
            <person name="Quiles M."/>
            <person name="Madan Babu M."/>
            <person name="Saito T."/>
            <person name="Buchrieser C."/>
            <person name="Wardroper A."/>
            <person name="Felder M."/>
            <person name="Thangavelu M."/>
            <person name="Johnson D."/>
            <person name="Knights A."/>
            <person name="Loulseged H."/>
            <person name="Mungall K.L."/>
            <person name="Oliver K."/>
            <person name="Price C."/>
            <person name="Quail M.A."/>
            <person name="Urushihara H."/>
            <person name="Hernandez J."/>
            <person name="Rabbinowitsch E."/>
            <person name="Steffen D."/>
            <person name="Sanders M."/>
            <person name="Ma J."/>
            <person name="Kohara Y."/>
            <person name="Sharp S."/>
            <person name="Simmonds M.N."/>
            <person name="Spiegler S."/>
            <person name="Tivey A."/>
            <person name="Sugano S."/>
            <person name="White B."/>
            <person name="Walker D."/>
            <person name="Woodward J.R."/>
            <person name="Winckler T."/>
            <person name="Tanaka Y."/>
            <person name="Shaulsky G."/>
            <person name="Schleicher M."/>
            <person name="Weinstock G.M."/>
            <person name="Rosenthal A."/>
            <person name="Cox E.C."/>
            <person name="Chisholm R.L."/>
            <person name="Gibbs R.A."/>
            <person name="Loomis W.F."/>
            <person name="Platzer M."/>
            <person name="Kay R.R."/>
            <person name="Williams J.G."/>
            <person name="Dear P.H."/>
            <person name="Noegel A.A."/>
            <person name="Barrell B.G."/>
            <person name="Kuspa A."/>
        </authorList>
    </citation>
    <scope>NUCLEOTIDE SEQUENCE [LARGE SCALE GENOMIC DNA]</scope>
    <source>
        <strain>AX4</strain>
    </source>
</reference>
<gene>
    <name type="primary">gacZ</name>
    <name type="ORF">DDB_G0269496</name>
</gene>
<dbReference type="EMBL" id="AAFI02000005">
    <property type="protein sequence ID" value="EAL72098.1"/>
    <property type="molecule type" value="Genomic_DNA"/>
</dbReference>
<dbReference type="RefSeq" id="XP_646012.1">
    <property type="nucleotide sequence ID" value="XM_640920.1"/>
</dbReference>
<dbReference type="SMR" id="Q55DW9"/>
<dbReference type="FunCoup" id="Q55DW9">
    <property type="interactions" value="618"/>
</dbReference>
<dbReference type="PaxDb" id="44689-DDB0233848"/>
<dbReference type="EnsemblProtists" id="EAL72098">
    <property type="protein sequence ID" value="EAL72098"/>
    <property type="gene ID" value="DDB_G0269496"/>
</dbReference>
<dbReference type="GeneID" id="8616960"/>
<dbReference type="KEGG" id="ddi:DDB_G0269496"/>
<dbReference type="dictyBase" id="DDB_G0269496">
    <property type="gene designation" value="gacZ"/>
</dbReference>
<dbReference type="VEuPathDB" id="AmoebaDB:DDB_G0269496"/>
<dbReference type="eggNOG" id="KOG4269">
    <property type="taxonomic scope" value="Eukaryota"/>
</dbReference>
<dbReference type="HOGENOM" id="CLU_292302_0_0_1"/>
<dbReference type="InParanoid" id="Q55DW9"/>
<dbReference type="OMA" id="NRCILHH"/>
<dbReference type="Reactome" id="R-DDI-9013148">
    <property type="pathway name" value="CDC42 GTPase cycle"/>
</dbReference>
<dbReference type="Reactome" id="R-DDI-9013149">
    <property type="pathway name" value="RAC1 GTPase cycle"/>
</dbReference>
<dbReference type="Reactome" id="R-DDI-9013404">
    <property type="pathway name" value="RAC2 GTPase cycle"/>
</dbReference>
<dbReference type="Reactome" id="R-DDI-9013406">
    <property type="pathway name" value="RHOQ GTPase cycle"/>
</dbReference>
<dbReference type="Reactome" id="R-DDI-9013409">
    <property type="pathway name" value="RHOJ GTPase cycle"/>
</dbReference>
<dbReference type="Reactome" id="R-DDI-9013423">
    <property type="pathway name" value="RAC3 GTPase cycle"/>
</dbReference>
<dbReference type="PRO" id="PR:Q55DW9"/>
<dbReference type="Proteomes" id="UP000002195">
    <property type="component" value="Chromosome 1"/>
</dbReference>
<dbReference type="GO" id="GO:0005737">
    <property type="term" value="C:cytoplasm"/>
    <property type="evidence" value="ECO:0000318"/>
    <property type="project" value="GO_Central"/>
</dbReference>
<dbReference type="GO" id="GO:0005096">
    <property type="term" value="F:GTPase activator activity"/>
    <property type="evidence" value="ECO:0000318"/>
    <property type="project" value="GO_Central"/>
</dbReference>
<dbReference type="GO" id="GO:0008270">
    <property type="term" value="F:zinc ion binding"/>
    <property type="evidence" value="ECO:0007669"/>
    <property type="project" value="UniProtKB-KW"/>
</dbReference>
<dbReference type="GO" id="GO:0007264">
    <property type="term" value="P:small GTPase-mediated signal transduction"/>
    <property type="evidence" value="ECO:0000318"/>
    <property type="project" value="GO_Central"/>
</dbReference>
<dbReference type="CDD" id="cd00159">
    <property type="entry name" value="RhoGAP"/>
    <property type="match status" value="1"/>
</dbReference>
<dbReference type="Gene3D" id="6.10.140.2220">
    <property type="match status" value="1"/>
</dbReference>
<dbReference type="Gene3D" id="1.10.555.10">
    <property type="entry name" value="Rho GTPase activation protein"/>
    <property type="match status" value="1"/>
</dbReference>
<dbReference type="InterPro" id="IPR008936">
    <property type="entry name" value="Rho_GTPase_activation_prot"/>
</dbReference>
<dbReference type="InterPro" id="IPR000198">
    <property type="entry name" value="RhoGAP_dom"/>
</dbReference>
<dbReference type="InterPro" id="IPR002893">
    <property type="entry name" value="Znf_MYND"/>
</dbReference>
<dbReference type="PANTHER" id="PTHR45808">
    <property type="entry name" value="RHO GTPASE-ACTIVATING PROTEIN 68F"/>
    <property type="match status" value="1"/>
</dbReference>
<dbReference type="PANTHER" id="PTHR45808:SF12">
    <property type="entry name" value="RHO GTPASE-ACTIVATING PROTEIN GACZ"/>
    <property type="match status" value="1"/>
</dbReference>
<dbReference type="Pfam" id="PF00620">
    <property type="entry name" value="RhoGAP"/>
    <property type="match status" value="1"/>
</dbReference>
<dbReference type="Pfam" id="PF01753">
    <property type="entry name" value="zf-MYND"/>
    <property type="match status" value="1"/>
</dbReference>
<dbReference type="SMART" id="SM00324">
    <property type="entry name" value="RhoGAP"/>
    <property type="match status" value="1"/>
</dbReference>
<dbReference type="SUPFAM" id="SSF48350">
    <property type="entry name" value="GTPase activation domain, GAP"/>
    <property type="match status" value="1"/>
</dbReference>
<dbReference type="SUPFAM" id="SSF144232">
    <property type="entry name" value="HIT/MYND zinc finger-like"/>
    <property type="match status" value="1"/>
</dbReference>
<dbReference type="PROSITE" id="PS50238">
    <property type="entry name" value="RHOGAP"/>
    <property type="match status" value="1"/>
</dbReference>
<dbReference type="PROSITE" id="PS01360">
    <property type="entry name" value="ZF_MYND_1"/>
    <property type="match status" value="1"/>
</dbReference>
<dbReference type="PROSITE" id="PS50865">
    <property type="entry name" value="ZF_MYND_2"/>
    <property type="match status" value="1"/>
</dbReference>